<accession>Q87Q46</accession>
<reference key="1">
    <citation type="journal article" date="2003" name="Lancet">
        <title>Genome sequence of Vibrio parahaemolyticus: a pathogenic mechanism distinct from that of V. cholerae.</title>
        <authorList>
            <person name="Makino K."/>
            <person name="Oshima K."/>
            <person name="Kurokawa K."/>
            <person name="Yokoyama K."/>
            <person name="Uda T."/>
            <person name="Tagomori K."/>
            <person name="Iijima Y."/>
            <person name="Najima M."/>
            <person name="Nakano M."/>
            <person name="Yamashita A."/>
            <person name="Kubota Y."/>
            <person name="Kimura S."/>
            <person name="Yasunaga T."/>
            <person name="Honda T."/>
            <person name="Shinagawa H."/>
            <person name="Hattori M."/>
            <person name="Iida T."/>
        </authorList>
    </citation>
    <scope>NUCLEOTIDE SEQUENCE [LARGE SCALE GENOMIC DNA]</scope>
    <source>
        <strain>RIMD 2210633</strain>
    </source>
</reference>
<dbReference type="EC" id="2.4.2.21" evidence="1"/>
<dbReference type="EMBL" id="BA000031">
    <property type="protein sequence ID" value="BAC59567.1"/>
    <property type="molecule type" value="Genomic_DNA"/>
</dbReference>
<dbReference type="RefSeq" id="NP_797683.1">
    <property type="nucleotide sequence ID" value="NC_004603.1"/>
</dbReference>
<dbReference type="RefSeq" id="WP_005480702.1">
    <property type="nucleotide sequence ID" value="NC_004603.1"/>
</dbReference>
<dbReference type="SMR" id="Q87Q46"/>
<dbReference type="GeneID" id="1188809"/>
<dbReference type="KEGG" id="vpa:VP1304"/>
<dbReference type="PATRIC" id="fig|223926.6.peg.1246"/>
<dbReference type="eggNOG" id="COG2038">
    <property type="taxonomic scope" value="Bacteria"/>
</dbReference>
<dbReference type="HOGENOM" id="CLU_002982_0_0_6"/>
<dbReference type="UniPathway" id="UPA00061">
    <property type="reaction ID" value="UER00516"/>
</dbReference>
<dbReference type="Proteomes" id="UP000002493">
    <property type="component" value="Chromosome 1"/>
</dbReference>
<dbReference type="GO" id="GO:0008939">
    <property type="term" value="F:nicotinate-nucleotide-dimethylbenzimidazole phosphoribosyltransferase activity"/>
    <property type="evidence" value="ECO:0007669"/>
    <property type="project" value="UniProtKB-UniRule"/>
</dbReference>
<dbReference type="GO" id="GO:0009236">
    <property type="term" value="P:cobalamin biosynthetic process"/>
    <property type="evidence" value="ECO:0007669"/>
    <property type="project" value="UniProtKB-KW"/>
</dbReference>
<dbReference type="CDD" id="cd02439">
    <property type="entry name" value="DMB-PRT_CobT"/>
    <property type="match status" value="1"/>
</dbReference>
<dbReference type="FunFam" id="3.40.50.10210:FF:000001">
    <property type="entry name" value="Nicotinate-nucleotide--dimethylbenzimidazole phosphoribosyltransferase"/>
    <property type="match status" value="1"/>
</dbReference>
<dbReference type="Gene3D" id="1.10.1610.10">
    <property type="match status" value="1"/>
</dbReference>
<dbReference type="Gene3D" id="3.40.50.10210">
    <property type="match status" value="1"/>
</dbReference>
<dbReference type="HAMAP" id="MF_00230">
    <property type="entry name" value="CobT"/>
    <property type="match status" value="1"/>
</dbReference>
<dbReference type="InterPro" id="IPR003200">
    <property type="entry name" value="Nict_dMeBzImd_PRibTrfase"/>
</dbReference>
<dbReference type="InterPro" id="IPR017846">
    <property type="entry name" value="Nict_dMeBzImd_PRibTrfase_bact"/>
</dbReference>
<dbReference type="InterPro" id="IPR023195">
    <property type="entry name" value="Nict_dMeBzImd_PRibTrfase_N"/>
</dbReference>
<dbReference type="InterPro" id="IPR036087">
    <property type="entry name" value="Nict_dMeBzImd_PRibTrfase_sf"/>
</dbReference>
<dbReference type="NCBIfam" id="TIGR03160">
    <property type="entry name" value="cobT_DBIPRT"/>
    <property type="match status" value="1"/>
</dbReference>
<dbReference type="NCBIfam" id="NF000996">
    <property type="entry name" value="PRK00105.1"/>
    <property type="match status" value="1"/>
</dbReference>
<dbReference type="PANTHER" id="PTHR43463">
    <property type="entry name" value="NICOTINATE-NUCLEOTIDE--DIMETHYLBENZIMIDAZOLE PHOSPHORIBOSYLTRANSFERASE"/>
    <property type="match status" value="1"/>
</dbReference>
<dbReference type="PANTHER" id="PTHR43463:SF1">
    <property type="entry name" value="NICOTINATE-NUCLEOTIDE--DIMETHYLBENZIMIDAZOLE PHOSPHORIBOSYLTRANSFERASE"/>
    <property type="match status" value="1"/>
</dbReference>
<dbReference type="Pfam" id="PF02277">
    <property type="entry name" value="DBI_PRT"/>
    <property type="match status" value="1"/>
</dbReference>
<dbReference type="SUPFAM" id="SSF52733">
    <property type="entry name" value="Nicotinate mononucleotide:5,6-dimethylbenzimidazole phosphoribosyltransferase (CobT)"/>
    <property type="match status" value="1"/>
</dbReference>
<protein>
    <recommendedName>
        <fullName evidence="1">Nicotinate-nucleotide--dimethylbenzimidazole phosphoribosyltransferase</fullName>
        <shortName evidence="1">NN:DBI PRT</shortName>
        <ecNumber evidence="1">2.4.2.21</ecNumber>
    </recommendedName>
    <alternativeName>
        <fullName evidence="1">N(1)-alpha-phosphoribosyltransferase</fullName>
    </alternativeName>
</protein>
<name>COBT_VIBPA</name>
<keyword id="KW-0169">Cobalamin biosynthesis</keyword>
<keyword id="KW-0328">Glycosyltransferase</keyword>
<keyword id="KW-0808">Transferase</keyword>
<sequence length="347" mass="36823">MDCSFSADIQTRIDNKTKPLGALGVLEKVALQLALIQSQDQAQAVEEIVIRKPTMLVFAGDHGVAKEGISIAPSEVTQQMVANFLAGGAAINCFCDVNQIEFKVIDCGMLAPIEVMVPEFKSHPNLIEQRLGNGTANFSKQAAMSSEQVALGLEYGARVAQSTIYSGSNLLMFGEMGIGNTSSASALLAALSPLEVNHCVGLGTGINSEQLSRKLKLVAQGVSRCRGLDAKAVLSQVGGFEIVQMVGAFLEAKRLKTPVLVDGFIVSVAAYVATLLDEETRDYMLFAHRSEENGHKFVLESLKAEPLLDLGLRLGEGTGAALALPLLKAAAQFYNKMASFESAGVTV</sequence>
<comment type="function">
    <text evidence="1">Catalyzes the synthesis of alpha-ribazole-5'-phosphate from nicotinate mononucleotide (NAMN) and 5,6-dimethylbenzimidazole (DMB).</text>
</comment>
<comment type="catalytic activity">
    <reaction evidence="1">
        <text>5,6-dimethylbenzimidazole + nicotinate beta-D-ribonucleotide = alpha-ribazole 5'-phosphate + nicotinate + H(+)</text>
        <dbReference type="Rhea" id="RHEA:11196"/>
        <dbReference type="ChEBI" id="CHEBI:15378"/>
        <dbReference type="ChEBI" id="CHEBI:15890"/>
        <dbReference type="ChEBI" id="CHEBI:32544"/>
        <dbReference type="ChEBI" id="CHEBI:57502"/>
        <dbReference type="ChEBI" id="CHEBI:57918"/>
        <dbReference type="EC" id="2.4.2.21"/>
    </reaction>
</comment>
<comment type="pathway">
    <text evidence="1">Nucleoside biosynthesis; alpha-ribazole biosynthesis; alpha-ribazole from 5,6-dimethylbenzimidazole: step 1/2.</text>
</comment>
<comment type="similarity">
    <text evidence="1">Belongs to the CobT family.</text>
</comment>
<evidence type="ECO:0000255" key="1">
    <source>
        <dbReference type="HAMAP-Rule" id="MF_00230"/>
    </source>
</evidence>
<organism>
    <name type="scientific">Vibrio parahaemolyticus serotype O3:K6 (strain RIMD 2210633)</name>
    <dbReference type="NCBI Taxonomy" id="223926"/>
    <lineage>
        <taxon>Bacteria</taxon>
        <taxon>Pseudomonadati</taxon>
        <taxon>Pseudomonadota</taxon>
        <taxon>Gammaproteobacteria</taxon>
        <taxon>Vibrionales</taxon>
        <taxon>Vibrionaceae</taxon>
        <taxon>Vibrio</taxon>
    </lineage>
</organism>
<gene>
    <name evidence="1" type="primary">cobT</name>
    <name type="ordered locus">VP1304</name>
</gene>
<feature type="chain" id="PRO_0000167076" description="Nicotinate-nucleotide--dimethylbenzimidazole phosphoribosyltransferase">
    <location>
        <begin position="1"/>
        <end position="347"/>
    </location>
</feature>
<feature type="active site" description="Proton acceptor" evidence="1">
    <location>
        <position position="316"/>
    </location>
</feature>
<proteinExistence type="inferred from homology"/>